<organism>
    <name type="scientific">Chlamydia felis (strain Fe/C-56)</name>
    <name type="common">Chlamydophila felis</name>
    <dbReference type="NCBI Taxonomy" id="264202"/>
    <lineage>
        <taxon>Bacteria</taxon>
        <taxon>Pseudomonadati</taxon>
        <taxon>Chlamydiota</taxon>
        <taxon>Chlamydiia</taxon>
        <taxon>Chlamydiales</taxon>
        <taxon>Chlamydiaceae</taxon>
        <taxon>Chlamydia/Chlamydophila group</taxon>
        <taxon>Chlamydia</taxon>
    </lineage>
</organism>
<dbReference type="EC" id="2.7.1.24" evidence="1"/>
<dbReference type="EMBL" id="AP006861">
    <property type="protein sequence ID" value="BAE81649.1"/>
    <property type="molecule type" value="Genomic_DNA"/>
</dbReference>
<dbReference type="RefSeq" id="WP_011458424.1">
    <property type="nucleotide sequence ID" value="NC_007899.1"/>
</dbReference>
<dbReference type="SMR" id="Q252Y9"/>
<dbReference type="STRING" id="264202.CF0877"/>
<dbReference type="KEGG" id="cfe:CF0877"/>
<dbReference type="eggNOG" id="COG0237">
    <property type="taxonomic scope" value="Bacteria"/>
</dbReference>
<dbReference type="HOGENOM" id="CLU_057180_3_1_0"/>
<dbReference type="OrthoDB" id="17745at2"/>
<dbReference type="UniPathway" id="UPA00241">
    <property type="reaction ID" value="UER00356"/>
</dbReference>
<dbReference type="Proteomes" id="UP000001260">
    <property type="component" value="Chromosome"/>
</dbReference>
<dbReference type="GO" id="GO:0005737">
    <property type="term" value="C:cytoplasm"/>
    <property type="evidence" value="ECO:0007669"/>
    <property type="project" value="UniProtKB-SubCell"/>
</dbReference>
<dbReference type="GO" id="GO:0005524">
    <property type="term" value="F:ATP binding"/>
    <property type="evidence" value="ECO:0007669"/>
    <property type="project" value="UniProtKB-UniRule"/>
</dbReference>
<dbReference type="GO" id="GO:0004140">
    <property type="term" value="F:dephospho-CoA kinase activity"/>
    <property type="evidence" value="ECO:0007669"/>
    <property type="project" value="UniProtKB-UniRule"/>
</dbReference>
<dbReference type="GO" id="GO:0015937">
    <property type="term" value="P:coenzyme A biosynthetic process"/>
    <property type="evidence" value="ECO:0007669"/>
    <property type="project" value="UniProtKB-UniRule"/>
</dbReference>
<dbReference type="CDD" id="cd02022">
    <property type="entry name" value="DPCK"/>
    <property type="match status" value="1"/>
</dbReference>
<dbReference type="Gene3D" id="3.40.50.300">
    <property type="entry name" value="P-loop containing nucleotide triphosphate hydrolases"/>
    <property type="match status" value="1"/>
</dbReference>
<dbReference type="HAMAP" id="MF_00376">
    <property type="entry name" value="Dephospho_CoA_kinase"/>
    <property type="match status" value="1"/>
</dbReference>
<dbReference type="InterPro" id="IPR001977">
    <property type="entry name" value="Depp_CoAkinase"/>
</dbReference>
<dbReference type="InterPro" id="IPR027417">
    <property type="entry name" value="P-loop_NTPase"/>
</dbReference>
<dbReference type="NCBIfam" id="TIGR00152">
    <property type="entry name" value="dephospho-CoA kinase"/>
    <property type="match status" value="1"/>
</dbReference>
<dbReference type="PANTHER" id="PTHR10695:SF46">
    <property type="entry name" value="BIFUNCTIONAL COENZYME A SYNTHASE-RELATED"/>
    <property type="match status" value="1"/>
</dbReference>
<dbReference type="PANTHER" id="PTHR10695">
    <property type="entry name" value="DEPHOSPHO-COA KINASE-RELATED"/>
    <property type="match status" value="1"/>
</dbReference>
<dbReference type="Pfam" id="PF01121">
    <property type="entry name" value="CoaE"/>
    <property type="match status" value="1"/>
</dbReference>
<dbReference type="SUPFAM" id="SSF52540">
    <property type="entry name" value="P-loop containing nucleoside triphosphate hydrolases"/>
    <property type="match status" value="1"/>
</dbReference>
<dbReference type="PROSITE" id="PS51219">
    <property type="entry name" value="DPCK"/>
    <property type="match status" value="1"/>
</dbReference>
<sequence>MLDLLKVSITGDLSSGKTEACRVFQDLGAYVISADKVSHSFLVPHSHIGHRVIDLLGSDVVVDNAFDRKVIAEKVFDNLVLLQALEAILHPEVCRIIEEQYCLVAKENKYPLFIAEVPLLYEIQYANKFDRVILITADENTRRERFTRKTNCSDLNFYQRCARFSSNEEKMMHADIIIENNGTKEELRHKVEEYFYALKGAL</sequence>
<protein>
    <recommendedName>
        <fullName evidence="1">Dephospho-CoA kinase</fullName>
        <ecNumber evidence="1">2.7.1.24</ecNumber>
    </recommendedName>
    <alternativeName>
        <fullName evidence="1">Dephosphocoenzyme A kinase</fullName>
    </alternativeName>
</protein>
<evidence type="ECO:0000255" key="1">
    <source>
        <dbReference type="HAMAP-Rule" id="MF_00376"/>
    </source>
</evidence>
<comment type="function">
    <text evidence="1">Catalyzes the phosphorylation of the 3'-hydroxyl group of dephosphocoenzyme A to form coenzyme A.</text>
</comment>
<comment type="catalytic activity">
    <reaction evidence="1">
        <text>3'-dephospho-CoA + ATP = ADP + CoA + H(+)</text>
        <dbReference type="Rhea" id="RHEA:18245"/>
        <dbReference type="ChEBI" id="CHEBI:15378"/>
        <dbReference type="ChEBI" id="CHEBI:30616"/>
        <dbReference type="ChEBI" id="CHEBI:57287"/>
        <dbReference type="ChEBI" id="CHEBI:57328"/>
        <dbReference type="ChEBI" id="CHEBI:456216"/>
        <dbReference type="EC" id="2.7.1.24"/>
    </reaction>
</comment>
<comment type="pathway">
    <text evidence="1">Cofactor biosynthesis; coenzyme A biosynthesis; CoA from (R)-pantothenate: step 5/5.</text>
</comment>
<comment type="subcellular location">
    <subcellularLocation>
        <location evidence="1">Cytoplasm</location>
    </subcellularLocation>
</comment>
<comment type="similarity">
    <text evidence="1">Belongs to the CoaE family.</text>
</comment>
<keyword id="KW-0067">ATP-binding</keyword>
<keyword id="KW-0173">Coenzyme A biosynthesis</keyword>
<keyword id="KW-0963">Cytoplasm</keyword>
<keyword id="KW-0418">Kinase</keyword>
<keyword id="KW-0547">Nucleotide-binding</keyword>
<keyword id="KW-0808">Transferase</keyword>
<name>COAE_CHLFF</name>
<gene>
    <name evidence="1" type="primary">coaE</name>
    <name type="ordered locus">CF0877</name>
</gene>
<reference key="1">
    <citation type="journal article" date="2006" name="DNA Res.">
        <title>Genome sequence of the cat pathogen, Chlamydophila felis.</title>
        <authorList>
            <person name="Azuma Y."/>
            <person name="Hirakawa H."/>
            <person name="Yamashita A."/>
            <person name="Cai Y."/>
            <person name="Rahman M.A."/>
            <person name="Suzuki H."/>
            <person name="Mitaku S."/>
            <person name="Toh H."/>
            <person name="Goto S."/>
            <person name="Murakami T."/>
            <person name="Sugi K."/>
            <person name="Hayashi H."/>
            <person name="Fukushi H."/>
            <person name="Hattori M."/>
            <person name="Kuhara S."/>
            <person name="Shirai M."/>
        </authorList>
    </citation>
    <scope>NUCLEOTIDE SEQUENCE [LARGE SCALE GENOMIC DNA]</scope>
    <source>
        <strain>Fe/C-56</strain>
    </source>
</reference>
<feature type="chain" id="PRO_0000243275" description="Dephospho-CoA kinase">
    <location>
        <begin position="1"/>
        <end position="202"/>
    </location>
</feature>
<feature type="domain" description="DPCK" evidence="1">
    <location>
        <begin position="6"/>
        <end position="202"/>
    </location>
</feature>
<feature type="binding site" evidence="1">
    <location>
        <begin position="14"/>
        <end position="19"/>
    </location>
    <ligand>
        <name>ATP</name>
        <dbReference type="ChEBI" id="CHEBI:30616"/>
    </ligand>
</feature>
<proteinExistence type="inferred from homology"/>
<accession>Q252Y9</accession>